<evidence type="ECO:0000250" key="1"/>
<evidence type="ECO:0000255" key="2">
    <source>
        <dbReference type="PROSITE-ProRule" id="PRU00303"/>
    </source>
</evidence>
<evidence type="ECO:0000305" key="3"/>
<keyword id="KW-0998">Cell outer membrane</keyword>
<keyword id="KW-0406">Ion transport</keyword>
<keyword id="KW-0449">Lipoprotein</keyword>
<keyword id="KW-0472">Membrane</keyword>
<keyword id="KW-0564">Palmitate</keyword>
<keyword id="KW-0625">Polysaccharide transport</keyword>
<keyword id="KW-0626">Porin</keyword>
<keyword id="KW-1185">Reference proteome</keyword>
<keyword id="KW-0732">Signal</keyword>
<keyword id="KW-0762">Sugar transport</keyword>
<keyword id="KW-0812">Transmembrane</keyword>
<keyword id="KW-1134">Transmembrane beta strand</keyword>
<keyword id="KW-0813">Transport</keyword>
<organism>
    <name type="scientific">Escherichia coli (strain K12)</name>
    <dbReference type="NCBI Taxonomy" id="83333"/>
    <lineage>
        <taxon>Bacteria</taxon>
        <taxon>Pseudomonadati</taxon>
        <taxon>Pseudomonadota</taxon>
        <taxon>Gammaproteobacteria</taxon>
        <taxon>Enterobacterales</taxon>
        <taxon>Enterobacteriaceae</taxon>
        <taxon>Escherichia</taxon>
    </lineage>
</organism>
<sequence>MKKNIFKFSVLTLAVLSLTACTLVPGQNLSTSNKDVIELPDNQYDLDKMVNIYPVTPGLIDQLRAKPIMSQANPELEQQIANYEYRIGIGDVLMVTVWDHPELTTPAGQYRSASDTGNWVNADGAIFYPYIGRLKVAGKTLTQVRNEITARLDSVIESPQVDVSVAAFRSQKAYVTGEVSKSGQQPITNIPLTIMDAINAAGGLTADADWRNVVLTQNGVKTKVNLYALMQRGDLRQNKLLHPGDILFIPRNDDLKVFVMGEVGKQSTLKMDRSGMTLAEALGNAEGMNQDVADATGIFVIRATQNKQNGKIANIYQLNAKDASAMILGTEFQLEPYDIVYVTTAPLARWNRVISLLVPTISGVHDLTETSRWIQTWPN</sequence>
<reference key="1">
    <citation type="journal article" date="1996" name="DNA Res.">
        <title>A 718-kb DNA sequence of the Escherichia coli K-12 genome corresponding to the 12.7-28.0 min region on the linkage map.</title>
        <authorList>
            <person name="Oshima T."/>
            <person name="Aiba H."/>
            <person name="Baba T."/>
            <person name="Fujita K."/>
            <person name="Hayashi K."/>
            <person name="Honjo A."/>
            <person name="Ikemoto K."/>
            <person name="Inada T."/>
            <person name="Itoh T."/>
            <person name="Kajihara M."/>
            <person name="Kanai K."/>
            <person name="Kashimoto K."/>
            <person name="Kimura S."/>
            <person name="Kitagawa M."/>
            <person name="Makino K."/>
            <person name="Masuda S."/>
            <person name="Miki T."/>
            <person name="Mizobuchi K."/>
            <person name="Mori H."/>
            <person name="Motomura K."/>
            <person name="Nakamura Y."/>
            <person name="Nashimoto H."/>
            <person name="Nishio Y."/>
            <person name="Saito N."/>
            <person name="Sampei G."/>
            <person name="Seki Y."/>
            <person name="Tagami H."/>
            <person name="Takemoto K."/>
            <person name="Wada C."/>
            <person name="Yamamoto Y."/>
            <person name="Yano M."/>
            <person name="Horiuchi T."/>
        </authorList>
    </citation>
    <scope>NUCLEOTIDE SEQUENCE [LARGE SCALE GENOMIC DNA]</scope>
    <source>
        <strain>K12 / W3110 / ATCC 27325 / DSM 5911</strain>
    </source>
</reference>
<reference key="2">
    <citation type="journal article" date="1997" name="Science">
        <title>The complete genome sequence of Escherichia coli K-12.</title>
        <authorList>
            <person name="Blattner F.R."/>
            <person name="Plunkett G. III"/>
            <person name="Bloch C.A."/>
            <person name="Perna N.T."/>
            <person name="Burland V."/>
            <person name="Riley M."/>
            <person name="Collado-Vides J."/>
            <person name="Glasner J.D."/>
            <person name="Rode C.K."/>
            <person name="Mayhew G.F."/>
            <person name="Gregor J."/>
            <person name="Davis N.W."/>
            <person name="Kirkpatrick H.A."/>
            <person name="Goeden M.A."/>
            <person name="Rose D.J."/>
            <person name="Mau B."/>
            <person name="Shao Y."/>
        </authorList>
    </citation>
    <scope>NUCLEOTIDE SEQUENCE [LARGE SCALE GENOMIC DNA]</scope>
    <source>
        <strain>K12 / MG1655 / ATCC 47076</strain>
    </source>
</reference>
<reference key="3">
    <citation type="journal article" date="2006" name="Mol. Syst. Biol.">
        <title>Highly accurate genome sequences of Escherichia coli K-12 strains MG1655 and W3110.</title>
        <authorList>
            <person name="Hayashi K."/>
            <person name="Morooka N."/>
            <person name="Yamamoto Y."/>
            <person name="Fujita K."/>
            <person name="Isono K."/>
            <person name="Choi S."/>
            <person name="Ohtsubo E."/>
            <person name="Baba T."/>
            <person name="Wanner B.L."/>
            <person name="Mori H."/>
            <person name="Horiuchi T."/>
        </authorList>
    </citation>
    <scope>NUCLEOTIDE SEQUENCE [LARGE SCALE GENOMIC DNA]</scope>
    <source>
        <strain>K12 / W3110 / ATCC 27325 / DSM 5911</strain>
    </source>
</reference>
<accession>P0A932</accession>
<accession>P75881</accession>
<proteinExistence type="inferred from homology"/>
<name>GFCE_ECOLI</name>
<comment type="function">
    <text>May be involved in polysaccharide transport.</text>
</comment>
<comment type="subcellular location">
    <subcellularLocation>
        <location evidence="1">Cell outer membrane</location>
        <topology evidence="1">Multi-pass membrane protein</topology>
    </subcellularLocation>
</comment>
<comment type="similarity">
    <text evidence="3">Belongs to the BexD/CtrA/VexA family.</text>
</comment>
<comment type="caution">
    <text evidence="3">In E.coli K12 / MG1655 and K12 / W3110 this operon is silenced by an IS1D insertion in the promoter region.</text>
</comment>
<dbReference type="EMBL" id="U00096">
    <property type="protein sequence ID" value="AAC74068.1"/>
    <property type="molecule type" value="Genomic_DNA"/>
</dbReference>
<dbReference type="EMBL" id="AP009048">
    <property type="protein sequence ID" value="BAA35748.1"/>
    <property type="molecule type" value="Genomic_DNA"/>
</dbReference>
<dbReference type="PIR" id="E64839">
    <property type="entry name" value="E64839"/>
</dbReference>
<dbReference type="RefSeq" id="NP_415503.1">
    <property type="nucleotide sequence ID" value="NC_000913.3"/>
</dbReference>
<dbReference type="RefSeq" id="WP_001295357.1">
    <property type="nucleotide sequence ID" value="NZ_STEB01000006.1"/>
</dbReference>
<dbReference type="SMR" id="P0A932"/>
<dbReference type="BioGRID" id="4261408">
    <property type="interactions" value="168"/>
</dbReference>
<dbReference type="FunCoup" id="P0A932">
    <property type="interactions" value="181"/>
</dbReference>
<dbReference type="STRING" id="511145.b0983"/>
<dbReference type="TCDB" id="1.B.18.3.8">
    <property type="family name" value="the outer membrane auxiliary (oma) protein family"/>
</dbReference>
<dbReference type="jPOST" id="P0A932"/>
<dbReference type="PaxDb" id="511145-b0983"/>
<dbReference type="EnsemblBacteria" id="AAC74068">
    <property type="protein sequence ID" value="AAC74068"/>
    <property type="gene ID" value="b0983"/>
</dbReference>
<dbReference type="GeneID" id="945586"/>
<dbReference type="KEGG" id="ecj:JW0966"/>
<dbReference type="KEGG" id="eco:b0983"/>
<dbReference type="KEGG" id="ecoc:C3026_05995"/>
<dbReference type="PATRIC" id="fig|1411691.4.peg.1290"/>
<dbReference type="EchoBASE" id="EB3492"/>
<dbReference type="eggNOG" id="COG1596">
    <property type="taxonomic scope" value="Bacteria"/>
</dbReference>
<dbReference type="HOGENOM" id="CLU_038343_4_2_6"/>
<dbReference type="InParanoid" id="P0A932"/>
<dbReference type="OMA" id="RIPTIYH"/>
<dbReference type="OrthoDB" id="9808421at2"/>
<dbReference type="PhylomeDB" id="P0A932"/>
<dbReference type="BioCyc" id="EcoCyc:G6504-MONOMER"/>
<dbReference type="PRO" id="PR:P0A932"/>
<dbReference type="Proteomes" id="UP000000625">
    <property type="component" value="Chromosome"/>
</dbReference>
<dbReference type="GO" id="GO:0009279">
    <property type="term" value="C:cell outer membrane"/>
    <property type="evidence" value="ECO:0007669"/>
    <property type="project" value="UniProtKB-SubCell"/>
</dbReference>
<dbReference type="GO" id="GO:0046930">
    <property type="term" value="C:pore complex"/>
    <property type="evidence" value="ECO:0007669"/>
    <property type="project" value="UniProtKB-KW"/>
</dbReference>
<dbReference type="GO" id="GO:0015159">
    <property type="term" value="F:polysaccharide transmembrane transporter activity"/>
    <property type="evidence" value="ECO:0000318"/>
    <property type="project" value="GO_Central"/>
</dbReference>
<dbReference type="GO" id="GO:0015288">
    <property type="term" value="F:porin activity"/>
    <property type="evidence" value="ECO:0007669"/>
    <property type="project" value="UniProtKB-KW"/>
</dbReference>
<dbReference type="GO" id="GO:0006811">
    <property type="term" value="P:monoatomic ion transport"/>
    <property type="evidence" value="ECO:0007669"/>
    <property type="project" value="UniProtKB-KW"/>
</dbReference>
<dbReference type="Gene3D" id="1.20.5.70">
    <property type="match status" value="1"/>
</dbReference>
<dbReference type="Gene3D" id="3.10.560.10">
    <property type="entry name" value="Outer membrane lipoprotein wza domain like"/>
    <property type="match status" value="2"/>
</dbReference>
<dbReference type="Gene3D" id="3.30.1950.10">
    <property type="entry name" value="wza like domain"/>
    <property type="match status" value="1"/>
</dbReference>
<dbReference type="InterPro" id="IPR049712">
    <property type="entry name" value="Poly_export"/>
</dbReference>
<dbReference type="InterPro" id="IPR003715">
    <property type="entry name" value="Poly_export_N"/>
</dbReference>
<dbReference type="InterPro" id="IPR054765">
    <property type="entry name" value="SLBB_dom"/>
</dbReference>
<dbReference type="InterPro" id="IPR040716">
    <property type="entry name" value="Wza_C"/>
</dbReference>
<dbReference type="NCBIfam" id="NF011658">
    <property type="entry name" value="PRK15078.1"/>
    <property type="match status" value="1"/>
</dbReference>
<dbReference type="PANTHER" id="PTHR33619">
    <property type="entry name" value="POLYSACCHARIDE EXPORT PROTEIN GFCE-RELATED"/>
    <property type="match status" value="1"/>
</dbReference>
<dbReference type="PANTHER" id="PTHR33619:SF3">
    <property type="entry name" value="POLYSACCHARIDE EXPORT PROTEIN GFCE-RELATED"/>
    <property type="match status" value="1"/>
</dbReference>
<dbReference type="Pfam" id="PF02563">
    <property type="entry name" value="Poly_export"/>
    <property type="match status" value="1"/>
</dbReference>
<dbReference type="Pfam" id="PF22461">
    <property type="entry name" value="SLBB_2"/>
    <property type="match status" value="2"/>
</dbReference>
<dbReference type="Pfam" id="PF18412">
    <property type="entry name" value="Wza_C"/>
    <property type="match status" value="1"/>
</dbReference>
<dbReference type="PROSITE" id="PS51257">
    <property type="entry name" value="PROKAR_LIPOPROTEIN"/>
    <property type="match status" value="1"/>
</dbReference>
<feature type="signal peptide" evidence="2">
    <location>
        <begin position="1"/>
        <end position="20"/>
    </location>
</feature>
<feature type="chain" id="PRO_0000025226" description="Putative polysaccharide export protein GfcE">
    <location>
        <begin position="21"/>
        <end position="379"/>
    </location>
</feature>
<feature type="lipid moiety-binding region" description="N-palmitoyl cysteine" evidence="2">
    <location>
        <position position="21"/>
    </location>
</feature>
<feature type="lipid moiety-binding region" description="S-diacylglycerol cysteine" evidence="2">
    <location>
        <position position="21"/>
    </location>
</feature>
<protein>
    <recommendedName>
        <fullName>Putative polysaccharide export protein GfcE</fullName>
    </recommendedName>
    <alternativeName>
        <fullName>Group 4 capsule protein E homolog</fullName>
    </alternativeName>
</protein>
<gene>
    <name type="primary">gfcE</name>
    <name type="synonym">yccZ</name>
    <name type="ordered locus">b0983</name>
    <name type="ordered locus">JW0966</name>
</gene>